<reference key="1">
    <citation type="journal article" date="2002" name="Nature">
        <title>The genome sequence of Schizosaccharomyces pombe.</title>
        <authorList>
            <person name="Wood V."/>
            <person name="Gwilliam R."/>
            <person name="Rajandream M.A."/>
            <person name="Lyne M.H."/>
            <person name="Lyne R."/>
            <person name="Stewart A."/>
            <person name="Sgouros J.G."/>
            <person name="Peat N."/>
            <person name="Hayles J."/>
            <person name="Baker S.G."/>
            <person name="Basham D."/>
            <person name="Bowman S."/>
            <person name="Brooks K."/>
            <person name="Brown D."/>
            <person name="Brown S."/>
            <person name="Chillingworth T."/>
            <person name="Churcher C.M."/>
            <person name="Collins M."/>
            <person name="Connor R."/>
            <person name="Cronin A."/>
            <person name="Davis P."/>
            <person name="Feltwell T."/>
            <person name="Fraser A."/>
            <person name="Gentles S."/>
            <person name="Goble A."/>
            <person name="Hamlin N."/>
            <person name="Harris D.E."/>
            <person name="Hidalgo J."/>
            <person name="Hodgson G."/>
            <person name="Holroyd S."/>
            <person name="Hornsby T."/>
            <person name="Howarth S."/>
            <person name="Huckle E.J."/>
            <person name="Hunt S."/>
            <person name="Jagels K."/>
            <person name="James K.D."/>
            <person name="Jones L."/>
            <person name="Jones M."/>
            <person name="Leather S."/>
            <person name="McDonald S."/>
            <person name="McLean J."/>
            <person name="Mooney P."/>
            <person name="Moule S."/>
            <person name="Mungall K.L."/>
            <person name="Murphy L.D."/>
            <person name="Niblett D."/>
            <person name="Odell C."/>
            <person name="Oliver K."/>
            <person name="O'Neil S."/>
            <person name="Pearson D."/>
            <person name="Quail M.A."/>
            <person name="Rabbinowitsch E."/>
            <person name="Rutherford K.M."/>
            <person name="Rutter S."/>
            <person name="Saunders D."/>
            <person name="Seeger K."/>
            <person name="Sharp S."/>
            <person name="Skelton J."/>
            <person name="Simmonds M.N."/>
            <person name="Squares R."/>
            <person name="Squares S."/>
            <person name="Stevens K."/>
            <person name="Taylor K."/>
            <person name="Taylor R.G."/>
            <person name="Tivey A."/>
            <person name="Walsh S.V."/>
            <person name="Warren T."/>
            <person name="Whitehead S."/>
            <person name="Woodward J.R."/>
            <person name="Volckaert G."/>
            <person name="Aert R."/>
            <person name="Robben J."/>
            <person name="Grymonprez B."/>
            <person name="Weltjens I."/>
            <person name="Vanstreels E."/>
            <person name="Rieger M."/>
            <person name="Schaefer M."/>
            <person name="Mueller-Auer S."/>
            <person name="Gabel C."/>
            <person name="Fuchs M."/>
            <person name="Duesterhoeft A."/>
            <person name="Fritzc C."/>
            <person name="Holzer E."/>
            <person name="Moestl D."/>
            <person name="Hilbert H."/>
            <person name="Borzym K."/>
            <person name="Langer I."/>
            <person name="Beck A."/>
            <person name="Lehrach H."/>
            <person name="Reinhardt R."/>
            <person name="Pohl T.M."/>
            <person name="Eger P."/>
            <person name="Zimmermann W."/>
            <person name="Wedler H."/>
            <person name="Wambutt R."/>
            <person name="Purnelle B."/>
            <person name="Goffeau A."/>
            <person name="Cadieu E."/>
            <person name="Dreano S."/>
            <person name="Gloux S."/>
            <person name="Lelaure V."/>
            <person name="Mottier S."/>
            <person name="Galibert F."/>
            <person name="Aves S.J."/>
            <person name="Xiang Z."/>
            <person name="Hunt C."/>
            <person name="Moore K."/>
            <person name="Hurst S.M."/>
            <person name="Lucas M."/>
            <person name="Rochet M."/>
            <person name="Gaillardin C."/>
            <person name="Tallada V.A."/>
            <person name="Garzon A."/>
            <person name="Thode G."/>
            <person name="Daga R.R."/>
            <person name="Cruzado L."/>
            <person name="Jimenez J."/>
            <person name="Sanchez M."/>
            <person name="del Rey F."/>
            <person name="Benito J."/>
            <person name="Dominguez A."/>
            <person name="Revuelta J.L."/>
            <person name="Moreno S."/>
            <person name="Armstrong J."/>
            <person name="Forsburg S.L."/>
            <person name="Cerutti L."/>
            <person name="Lowe T."/>
            <person name="McCombie W.R."/>
            <person name="Paulsen I."/>
            <person name="Potashkin J."/>
            <person name="Shpakovski G.V."/>
            <person name="Ussery D."/>
            <person name="Barrell B.G."/>
            <person name="Nurse P."/>
        </authorList>
    </citation>
    <scope>NUCLEOTIDE SEQUENCE [LARGE SCALE GENOMIC DNA]</scope>
    <source>
        <strain>972 / ATCC 24843</strain>
    </source>
</reference>
<reference key="2">
    <citation type="submission" date="1998-07" db="EMBL/GenBank/DDBJ databases">
        <title>S.pombe ribosomal protein rp22 homolog.</title>
        <authorList>
            <person name="Kawamukai M."/>
        </authorList>
    </citation>
    <scope>NUCLEOTIDE SEQUENCE [MRNA] OF 5-197</scope>
</reference>
<reference key="3">
    <citation type="journal article" date="2006" name="Nat. Biotechnol.">
        <title>ORFeome cloning and global analysis of protein localization in the fission yeast Schizosaccharomyces pombe.</title>
        <authorList>
            <person name="Matsuyama A."/>
            <person name="Arai R."/>
            <person name="Yashiroda Y."/>
            <person name="Shirai A."/>
            <person name="Kamata A."/>
            <person name="Sekido S."/>
            <person name="Kobayashi Y."/>
            <person name="Hashimoto A."/>
            <person name="Hamamoto M."/>
            <person name="Hiraoka Y."/>
            <person name="Horinouchi S."/>
            <person name="Yoshida M."/>
        </authorList>
    </citation>
    <scope>SUBCELLULAR LOCATION [LARGE SCALE ANALYSIS]</scope>
</reference>
<reference key="4">
    <citation type="journal article" date="2008" name="J. Proteome Res.">
        <title>Phosphoproteome analysis of fission yeast.</title>
        <authorList>
            <person name="Wilson-Grady J.T."/>
            <person name="Villen J."/>
            <person name="Gygi S.P."/>
        </authorList>
    </citation>
    <scope>PHOSPHORYLATION [LARGE SCALE ANALYSIS] AT SER-193</scope>
    <scope>IDENTIFICATION BY MASS SPECTROMETRY</scope>
</reference>
<gene>
    <name type="primary">rpl1601</name>
    <name type="synonym">rpl16b</name>
    <name type="ORF">SPBC24E9.13c</name>
    <name type="ORF">SPBC839.13c</name>
</gene>
<accession>O42991</accession>
<organism>
    <name type="scientific">Schizosaccharomyces pombe (strain 972 / ATCC 24843)</name>
    <name type="common">Fission yeast</name>
    <dbReference type="NCBI Taxonomy" id="284812"/>
    <lineage>
        <taxon>Eukaryota</taxon>
        <taxon>Fungi</taxon>
        <taxon>Dikarya</taxon>
        <taxon>Ascomycota</taxon>
        <taxon>Taphrinomycotina</taxon>
        <taxon>Schizosaccharomycetes</taxon>
        <taxon>Schizosaccharomycetales</taxon>
        <taxon>Schizosaccharomycetaceae</taxon>
        <taxon>Schizosaccharomyces</taxon>
    </lineage>
</organism>
<name>RL16B_SCHPO</name>
<dbReference type="EMBL" id="CU329671">
    <property type="protein sequence ID" value="CAB46706.1"/>
    <property type="molecule type" value="Genomic_DNA"/>
</dbReference>
<dbReference type="EMBL" id="AB016008">
    <property type="protein sequence ID" value="BAA31555.1"/>
    <property type="molecule type" value="mRNA"/>
</dbReference>
<dbReference type="PIR" id="T40720">
    <property type="entry name" value="T40720"/>
</dbReference>
<dbReference type="PIR" id="T43381">
    <property type="entry name" value="T43381"/>
</dbReference>
<dbReference type="RefSeq" id="NP_595253.1">
    <property type="nucleotide sequence ID" value="NM_001021159.2"/>
</dbReference>
<dbReference type="PDB" id="8ESQ">
    <property type="method" value="EM"/>
    <property type="resolution" value="2.80 A"/>
    <property type="chains" value="O=1-197"/>
</dbReference>
<dbReference type="PDB" id="8ESR">
    <property type="method" value="EM"/>
    <property type="resolution" value="3.20 A"/>
    <property type="chains" value="O=1-197"/>
</dbReference>
<dbReference type="PDB" id="8ETC">
    <property type="method" value="EM"/>
    <property type="resolution" value="3.10 A"/>
    <property type="chains" value="O=1-197"/>
</dbReference>
<dbReference type="PDB" id="8ETG">
    <property type="method" value="EM"/>
    <property type="resolution" value="3.40 A"/>
    <property type="chains" value="O=1-197"/>
</dbReference>
<dbReference type="PDB" id="8ETH">
    <property type="method" value="EM"/>
    <property type="resolution" value="3.80 A"/>
    <property type="chains" value="O=1-197"/>
</dbReference>
<dbReference type="PDB" id="8ETI">
    <property type="method" value="EM"/>
    <property type="resolution" value="3.70 A"/>
    <property type="chains" value="O=1-197"/>
</dbReference>
<dbReference type="PDB" id="8ETJ">
    <property type="method" value="EM"/>
    <property type="resolution" value="3.20 A"/>
    <property type="chains" value="O=1-197"/>
</dbReference>
<dbReference type="PDB" id="8EUG">
    <property type="method" value="EM"/>
    <property type="resolution" value="2.80 A"/>
    <property type="chains" value="O=1-197"/>
</dbReference>
<dbReference type="PDB" id="8EUI">
    <property type="method" value="EM"/>
    <property type="resolution" value="3.10 A"/>
    <property type="chains" value="O=1-197"/>
</dbReference>
<dbReference type="PDB" id="8EUP">
    <property type="method" value="EM"/>
    <property type="resolution" value="3.10 A"/>
    <property type="chains" value="O=1-197"/>
</dbReference>
<dbReference type="PDB" id="8EUY">
    <property type="method" value="EM"/>
    <property type="resolution" value="3.00 A"/>
    <property type="chains" value="O=1-197"/>
</dbReference>
<dbReference type="PDB" id="8EV3">
    <property type="method" value="EM"/>
    <property type="resolution" value="3.00 A"/>
    <property type="chains" value="O=1-197"/>
</dbReference>
<dbReference type="PDBsum" id="8ESQ"/>
<dbReference type="PDBsum" id="8ESR"/>
<dbReference type="PDBsum" id="8ETC"/>
<dbReference type="PDBsum" id="8ETG"/>
<dbReference type="PDBsum" id="8ETH"/>
<dbReference type="PDBsum" id="8ETI"/>
<dbReference type="PDBsum" id="8ETJ"/>
<dbReference type="PDBsum" id="8EUG"/>
<dbReference type="PDBsum" id="8EUI"/>
<dbReference type="PDBsum" id="8EUP"/>
<dbReference type="PDBsum" id="8EUY"/>
<dbReference type="PDBsum" id="8EV3"/>
<dbReference type="SMR" id="O42991"/>
<dbReference type="BioGRID" id="277689">
    <property type="interactions" value="253"/>
</dbReference>
<dbReference type="FunCoup" id="O42991">
    <property type="interactions" value="381"/>
</dbReference>
<dbReference type="STRING" id="284812.O42991"/>
<dbReference type="iPTMnet" id="O42991"/>
<dbReference type="PaxDb" id="4896-SPBC839.13c.1"/>
<dbReference type="EnsemblFungi" id="SPBC839.13c.1">
    <property type="protein sequence ID" value="SPBC839.13c.1:pep"/>
    <property type="gene ID" value="SPBC839.13c"/>
</dbReference>
<dbReference type="GeneID" id="2541175"/>
<dbReference type="KEGG" id="spo:2541175"/>
<dbReference type="PomBase" id="SPBC839.13c">
    <property type="gene designation" value="rpl1601"/>
</dbReference>
<dbReference type="VEuPathDB" id="FungiDB:SPBC839.13c"/>
<dbReference type="eggNOG" id="KOG3204">
    <property type="taxonomic scope" value="Eukaryota"/>
</dbReference>
<dbReference type="HOGENOM" id="CLU_076922_0_0_1"/>
<dbReference type="InParanoid" id="O42991"/>
<dbReference type="OMA" id="TRFNKTH"/>
<dbReference type="PhylomeDB" id="O42991"/>
<dbReference type="Reactome" id="R-SPO-156827">
    <property type="pathway name" value="L13a-mediated translational silencing of Ceruloplasmin expression"/>
</dbReference>
<dbReference type="Reactome" id="R-SPO-1799339">
    <property type="pathway name" value="SRP-dependent cotranslational protein targeting to membrane"/>
</dbReference>
<dbReference type="Reactome" id="R-SPO-72689">
    <property type="pathway name" value="Formation of a pool of free 40S subunits"/>
</dbReference>
<dbReference type="Reactome" id="R-SPO-72706">
    <property type="pathway name" value="GTP hydrolysis and joining of the 60S ribosomal subunit"/>
</dbReference>
<dbReference type="Reactome" id="R-SPO-975956">
    <property type="pathway name" value="Nonsense Mediated Decay (NMD) independent of the Exon Junction Complex (EJC)"/>
</dbReference>
<dbReference type="Reactome" id="R-SPO-975957">
    <property type="pathway name" value="Nonsense Mediated Decay (NMD) enhanced by the Exon Junction Complex (EJC)"/>
</dbReference>
<dbReference type="PRO" id="PR:O42991"/>
<dbReference type="Proteomes" id="UP000002485">
    <property type="component" value="Chromosome II"/>
</dbReference>
<dbReference type="GO" id="GO:0005829">
    <property type="term" value="C:cytosol"/>
    <property type="evidence" value="ECO:0007005"/>
    <property type="project" value="PomBase"/>
</dbReference>
<dbReference type="GO" id="GO:0022625">
    <property type="term" value="C:cytosolic large ribosomal subunit"/>
    <property type="evidence" value="ECO:0000318"/>
    <property type="project" value="GO_Central"/>
</dbReference>
<dbReference type="GO" id="GO:0030684">
    <property type="term" value="C:preribosome"/>
    <property type="evidence" value="ECO:0000314"/>
    <property type="project" value="PomBase"/>
</dbReference>
<dbReference type="GO" id="GO:0005840">
    <property type="term" value="C:ribosome"/>
    <property type="evidence" value="ECO:0000318"/>
    <property type="project" value="GO_Central"/>
</dbReference>
<dbReference type="GO" id="GO:0003729">
    <property type="term" value="F:mRNA binding"/>
    <property type="evidence" value="ECO:0000318"/>
    <property type="project" value="GO_Central"/>
</dbReference>
<dbReference type="GO" id="GO:0003735">
    <property type="term" value="F:structural constituent of ribosome"/>
    <property type="evidence" value="ECO:0000318"/>
    <property type="project" value="GO_Central"/>
</dbReference>
<dbReference type="GO" id="GO:0002181">
    <property type="term" value="P:cytoplasmic translation"/>
    <property type="evidence" value="ECO:0000266"/>
    <property type="project" value="PomBase"/>
</dbReference>
<dbReference type="GO" id="GO:0017148">
    <property type="term" value="P:negative regulation of translation"/>
    <property type="evidence" value="ECO:0000318"/>
    <property type="project" value="GO_Central"/>
</dbReference>
<dbReference type="CDD" id="cd00392">
    <property type="entry name" value="Ribosomal_L13"/>
    <property type="match status" value="1"/>
</dbReference>
<dbReference type="FunFam" id="6.10.250.3250:FF:000001">
    <property type="entry name" value="60S ribosomal protein L13a"/>
    <property type="match status" value="1"/>
</dbReference>
<dbReference type="FunFam" id="3.90.1180.10:FF:000002">
    <property type="entry name" value="60S ribosomal protein L16"/>
    <property type="match status" value="1"/>
</dbReference>
<dbReference type="Gene3D" id="6.10.250.3250">
    <property type="match status" value="1"/>
</dbReference>
<dbReference type="Gene3D" id="3.90.1180.10">
    <property type="entry name" value="Ribosomal protein L13"/>
    <property type="match status" value="1"/>
</dbReference>
<dbReference type="HAMAP" id="MF_01366">
    <property type="entry name" value="Ribosomal_uL13"/>
    <property type="match status" value="1"/>
</dbReference>
<dbReference type="InterPro" id="IPR005822">
    <property type="entry name" value="Ribosomal_uL13"/>
</dbReference>
<dbReference type="InterPro" id="IPR023563">
    <property type="entry name" value="Ribosomal_uL13_CS"/>
</dbReference>
<dbReference type="InterPro" id="IPR005755">
    <property type="entry name" value="Ribosomal_uL13_euk/arc"/>
</dbReference>
<dbReference type="InterPro" id="IPR036899">
    <property type="entry name" value="Ribosomal_uL13_sf"/>
</dbReference>
<dbReference type="NCBIfam" id="TIGR01077">
    <property type="entry name" value="L13_A_E"/>
    <property type="match status" value="1"/>
</dbReference>
<dbReference type="PANTHER" id="PTHR11545:SF3">
    <property type="entry name" value="LARGE RIBOSOMAL SUBUNIT PROTEIN UL13"/>
    <property type="match status" value="1"/>
</dbReference>
<dbReference type="PANTHER" id="PTHR11545">
    <property type="entry name" value="RIBOSOMAL PROTEIN L13"/>
    <property type="match status" value="1"/>
</dbReference>
<dbReference type="Pfam" id="PF00572">
    <property type="entry name" value="Ribosomal_L13"/>
    <property type="match status" value="1"/>
</dbReference>
<dbReference type="SUPFAM" id="SSF52161">
    <property type="entry name" value="Ribosomal protein L13"/>
    <property type="match status" value="1"/>
</dbReference>
<dbReference type="PROSITE" id="PS00783">
    <property type="entry name" value="RIBOSOMAL_L13"/>
    <property type="match status" value="1"/>
</dbReference>
<protein>
    <recommendedName>
        <fullName evidence="4">Large ribosomal subunit protein uL13B</fullName>
    </recommendedName>
    <alternativeName>
        <fullName>60S ribosomal protein L16-B</fullName>
    </alternativeName>
</protein>
<evidence type="ECO:0000250" key="1">
    <source>
        <dbReference type="UniProtKB" id="P26785"/>
    </source>
</evidence>
<evidence type="ECO:0000269" key="2">
    <source>
    </source>
</evidence>
<evidence type="ECO:0000269" key="3">
    <source>
    </source>
</evidence>
<evidence type="ECO:0000305" key="4"/>
<evidence type="ECO:0007829" key="5">
    <source>
        <dbReference type="PDB" id="8ETC"/>
    </source>
</evidence>
<evidence type="ECO:0007829" key="6">
    <source>
        <dbReference type="PDB" id="8EUP"/>
    </source>
</evidence>
<evidence type="ECO:0007829" key="7">
    <source>
        <dbReference type="PDB" id="8EUY"/>
    </source>
</evidence>
<comment type="function">
    <text evidence="1">Component of the ribosome, a large ribonucleoprotein complex responsible for the synthesis of proteins in the cell. The small ribosomal subunit (SSU) binds messenger RNAs (mRNAs) and translates the encoded message by selecting cognate aminoacyl-transfer RNA (tRNA) molecules. The large subunit (LSU) contains the ribosomal catalytic site termed the peptidyl transferase center (PTC), which catalyzes the formation of peptide bonds, thereby polymerizing the amino acids delivered by tRNAs into a polypeptide chain. The nascent polypeptides leave the ribosome through a tunnel in the LSU and interact with protein factors that function in enzymatic processing, targeting, and the membrane insertion of nascent chains at the exit of the ribosomal tunnel.</text>
</comment>
<comment type="subunit">
    <text evidence="1">Component of the large ribosomal subunit (LSU). Mature yeast ribosomes consist of a small (40S) and a large (60S) subunit. The 40S small subunit contains 1 molecule of ribosomal RNA (18S rRNA) and at least 33 different proteins. The large 60S subunit contains 3 rRNA molecules (25S, 5.8S and 5S rRNA) and at least 46 different proteins.</text>
</comment>
<comment type="subcellular location">
    <subcellularLocation>
        <location evidence="2">Cytoplasm</location>
    </subcellularLocation>
</comment>
<comment type="miscellaneous">
    <text>There are 3 genes for uL13 in S.pombe.</text>
</comment>
<comment type="similarity">
    <text evidence="4">Belongs to the universal ribosomal protein uL13 family.</text>
</comment>
<feature type="chain" id="PRO_0000133789" description="Large ribosomal subunit protein uL13B">
    <location>
        <begin position="1"/>
        <end position="197"/>
    </location>
</feature>
<feature type="modified residue" description="Phosphoserine" evidence="3">
    <location>
        <position position="193"/>
    </location>
</feature>
<feature type="strand" evidence="7">
    <location>
        <begin position="6"/>
        <end position="11"/>
    </location>
</feature>
<feature type="helix" evidence="7">
    <location>
        <begin position="17"/>
        <end position="29"/>
    </location>
</feature>
<feature type="strand" evidence="7">
    <location>
        <begin position="33"/>
        <end position="37"/>
    </location>
</feature>
<feature type="helix" evidence="7">
    <location>
        <begin position="39"/>
        <end position="41"/>
    </location>
</feature>
<feature type="strand" evidence="7">
    <location>
        <begin position="43"/>
        <end position="46"/>
    </location>
</feature>
<feature type="helix" evidence="7">
    <location>
        <begin position="48"/>
        <end position="60"/>
    </location>
</feature>
<feature type="turn" evidence="5">
    <location>
        <begin position="67"/>
        <end position="69"/>
    </location>
</feature>
<feature type="helix" evidence="7">
    <location>
        <begin position="77"/>
        <end position="87"/>
    </location>
</feature>
<feature type="strand" evidence="6">
    <location>
        <begin position="91"/>
        <end position="93"/>
    </location>
</feature>
<feature type="helix" evidence="7">
    <location>
        <begin position="94"/>
        <end position="100"/>
    </location>
</feature>
<feature type="strand" evidence="7">
    <location>
        <begin position="103"/>
        <end position="105"/>
    </location>
</feature>
<feature type="helix" evidence="7">
    <location>
        <begin position="111"/>
        <end position="114"/>
    </location>
</feature>
<feature type="turn" evidence="7">
    <location>
        <begin position="122"/>
        <end position="124"/>
    </location>
</feature>
<feature type="helix" evidence="7">
    <location>
        <begin position="126"/>
        <end position="129"/>
    </location>
</feature>
<feature type="strand" evidence="7">
    <location>
        <begin position="136"/>
        <end position="138"/>
    </location>
</feature>
<feature type="helix" evidence="7">
    <location>
        <begin position="139"/>
        <end position="144"/>
    </location>
</feature>
<feature type="turn" evidence="7">
    <location>
        <begin position="145"/>
        <end position="147"/>
    </location>
</feature>
<feature type="helix" evidence="7">
    <location>
        <begin position="151"/>
        <end position="185"/>
    </location>
</feature>
<feature type="helix" evidence="7">
    <location>
        <begin position="188"/>
        <end position="191"/>
    </location>
</feature>
<feature type="helix" evidence="7">
    <location>
        <begin position="193"/>
        <end position="195"/>
    </location>
</feature>
<keyword id="KW-0002">3D-structure</keyword>
<keyword id="KW-0963">Cytoplasm</keyword>
<keyword id="KW-0597">Phosphoprotein</keyword>
<keyword id="KW-1185">Reference proteome</keyword>
<keyword id="KW-0687">Ribonucleoprotein</keyword>
<keyword id="KW-0689">Ribosomal protein</keyword>
<sequence>MSEFQKVVVIDAKGHLLGRLASVVAKQLLGGQKVVVVRCEELNISGHFFRNKLKYLAYLRKACRYNPSRGAFHFRAPSRIFQKAVRGMLPHKTARGQAALEHLQAVEGIPPPFDKQKRVVVPAALRVLRLKPGRKYCTVGRLSSEVGWKYNDIVAKLEERRKVKSAAFYQAKLAKQKKIASAKEASPVNQKLSQFGY</sequence>
<proteinExistence type="evidence at protein level"/>